<evidence type="ECO:0000250" key="1">
    <source>
        <dbReference type="UniProtKB" id="C8VTV4"/>
    </source>
</evidence>
<evidence type="ECO:0000255" key="2">
    <source>
        <dbReference type="PROSITE-ProRule" id="PRU01165"/>
    </source>
</evidence>
<evidence type="ECO:0000256" key="3">
    <source>
        <dbReference type="SAM" id="MobiDB-lite"/>
    </source>
</evidence>
<evidence type="ECO:0000269" key="4">
    <source>
    </source>
</evidence>
<evidence type="ECO:0000269" key="5">
    <source>
    </source>
</evidence>
<evidence type="ECO:0000269" key="6">
    <source>
    </source>
</evidence>
<evidence type="ECO:0000269" key="7">
    <source>
    </source>
</evidence>
<evidence type="ECO:0000303" key="8">
    <source>
    </source>
</evidence>
<evidence type="ECO:0000303" key="9">
    <source>
    </source>
</evidence>
<evidence type="ECO:0000305" key="10"/>
<proteinExistence type="evidence at protein level"/>
<accession>W7MRI4</accession>
<accession>A0MAR2</accession>
<comment type="function">
    <text evidence="1 4 5 6">Component of the velvet transcription factor complex that controls sexual/asexual developmental ratio in response to light, promoting sexual development in the darkness while stimulating asexual sporulation under illumination (By similarity). The velvet complex hat acts as a global regulator for secondary metabolite gene expression (PubMed:22247572). Controls the expression of the cycotoxins fumonisins and fusarins gene cluster (PubMed:19382792, PubMed:22247572, PubMed:24792348). Involved in cell wall integrity, cell surface hydrophobicity, hyphal polarity and conidiation pattern (PubMed:17054442, PubMed:24792348). Required for pathogenicity against maize seedlings (PubMed:22247572). Involved in oxidative stress resistance by positively regulating the transcription of the catalase-encoding gene CAT2 (PubMed:24792348).</text>
</comment>
<comment type="subunit">
    <text evidence="1 7">Component of the heterotrimeric velvet complex composed of LAE1, VE1 and VELB; VE1 acting as a bridging protein between LAE1 and VELB (By similarity). Interacts with VELB and VELC (PubMed:24792348).</text>
</comment>
<comment type="subcellular location">
    <subcellularLocation>
        <location evidence="1">Nucleus</location>
    </subcellularLocation>
    <subcellularLocation>
        <location evidence="1">Cytoplasm</location>
    </subcellularLocation>
    <text evidence="1">Enriched in the nucleus in the dark (By similarity).</text>
</comment>
<comment type="domain">
    <text evidence="1">The C-terminal PEST domain is a region rich in proline, glutamic acid, serine and threonine residues that is required for the light-dependent regulation of development and secondary metabolism (By similarity).</text>
</comment>
<comment type="disruption phenotype">
    <text evidence="4 5 6 7">Suppresses aerial hyphal growth,reduced colony surface hydrophobicity on solid media, and increases the ratio of macroconidia to microconidia (PubMed:17054442, PubMed:24792348). Impairs production of fumonisins and fusarins, and reduces pathogenicity against maize seedlings (PubMed:19382792, PubMed:22247572, PubMed:24792348).</text>
</comment>
<comment type="similarity">
    <text evidence="10">Belongs to the velvet family. VeA subfamily.</text>
</comment>
<organism>
    <name type="scientific">Gibberella moniliformis (strain M3125 / FGSC 7600)</name>
    <name type="common">Maize ear and stalk rot fungus</name>
    <name type="synonym">Fusarium verticillioides</name>
    <dbReference type="NCBI Taxonomy" id="334819"/>
    <lineage>
        <taxon>Eukaryota</taxon>
        <taxon>Fungi</taxon>
        <taxon>Dikarya</taxon>
        <taxon>Ascomycota</taxon>
        <taxon>Pezizomycotina</taxon>
        <taxon>Sordariomycetes</taxon>
        <taxon>Hypocreomycetidae</taxon>
        <taxon>Hypocreales</taxon>
        <taxon>Nectriaceae</taxon>
        <taxon>Fusarium</taxon>
        <taxon>Fusarium fujikuroi species complex</taxon>
    </lineage>
</organism>
<feature type="chain" id="PRO_0000435764" description="Developmental and secondary metabolism regulator VE1">
    <location>
        <begin position="1"/>
        <end position="531"/>
    </location>
</feature>
<feature type="domain" description="Velvet" evidence="2">
    <location>
        <begin position="26"/>
        <end position="220"/>
    </location>
</feature>
<feature type="region of interest" description="Disordered" evidence="3">
    <location>
        <begin position="206"/>
        <end position="435"/>
    </location>
</feature>
<feature type="region of interest" description="PEST" evidence="1">
    <location>
        <begin position="430"/>
        <end position="461"/>
    </location>
</feature>
<feature type="region of interest" description="Disordered" evidence="3">
    <location>
        <begin position="447"/>
        <end position="517"/>
    </location>
</feature>
<feature type="short sequence motif" description="Nuclear localization signal" evidence="1">
    <location>
        <begin position="40"/>
        <end position="45"/>
    </location>
</feature>
<feature type="compositionally biased region" description="Basic and acidic residues" evidence="3">
    <location>
        <begin position="244"/>
        <end position="253"/>
    </location>
</feature>
<feature type="compositionally biased region" description="Pro residues" evidence="3">
    <location>
        <begin position="295"/>
        <end position="306"/>
    </location>
</feature>
<feature type="compositionally biased region" description="Polar residues" evidence="3">
    <location>
        <begin position="348"/>
        <end position="357"/>
    </location>
</feature>
<feature type="compositionally biased region" description="Basic and acidic residues" evidence="3">
    <location>
        <begin position="381"/>
        <end position="390"/>
    </location>
</feature>
<feature type="compositionally biased region" description="Low complexity" evidence="3">
    <location>
        <begin position="391"/>
        <end position="405"/>
    </location>
</feature>
<feature type="compositionally biased region" description="Pro residues" evidence="3">
    <location>
        <begin position="416"/>
        <end position="427"/>
    </location>
</feature>
<feature type="compositionally biased region" description="Polar residues" evidence="3">
    <location>
        <begin position="479"/>
        <end position="491"/>
    </location>
</feature>
<feature type="sequence conflict" description="In Ref. 1; ABC02879." evidence="10" ref="1">
    <original>Y</original>
    <variation>N</variation>
    <location>
        <position position="192"/>
    </location>
</feature>
<feature type="sequence conflict" description="In Ref. 1; ABC02879." evidence="10" ref="1">
    <original>P</original>
    <variation>R</variation>
    <location>
        <position position="216"/>
    </location>
</feature>
<reference key="1">
    <citation type="journal article" date="2006" name="Mol. Microbiol.">
        <title>FvVE1 regulates filamentous growth, the ratio of microconidia to macroconidia and cell wall formation in Fusarium verticillioides.</title>
        <authorList>
            <person name="Li S."/>
            <person name="Myung K."/>
            <person name="Guse D."/>
            <person name="Donkin B."/>
            <person name="Proctor R.H."/>
            <person name="Grayburn W.S."/>
            <person name="Calvo A.M."/>
        </authorList>
    </citation>
    <scope>NUCLEOTIDE SEQUENCE [GENOMIC DNA]</scope>
    <scope>FUNCTION</scope>
    <scope>DISRUPTION PHENOTYPE</scope>
    <source>
        <strain>M3125 / FGSC 7600</strain>
    </source>
</reference>
<reference key="2">
    <citation type="journal article" date="2012" name="Plant Pathol.">
        <title>The conserved global regulator VeA is necessary for symptom production and mycotoxin synthesis in maize seedlings by Fusarium verticillioides.</title>
        <authorList>
            <person name="Myung K."/>
            <person name="Zitomer N.C."/>
            <person name="Duvall M."/>
            <person name="Glenn A.E."/>
            <person name="Riley R.T."/>
            <person name="Calvo A.M."/>
        </authorList>
    </citation>
    <scope>NUCLEOTIDE SEQUENCE [GENOMIC DNA]</scope>
    <scope>FUNCTION</scope>
    <scope>DISRUPTION PHENOTYPE</scope>
    <source>
        <strain>M3125 / FGSC 7600</strain>
    </source>
</reference>
<reference key="3">
    <citation type="journal article" date="2010" name="Nature">
        <title>Comparative genomics reveals mobile pathogenicity chromosomes in Fusarium.</title>
        <authorList>
            <person name="Ma L.-J."/>
            <person name="van der Does H.C."/>
            <person name="Borkovich K.A."/>
            <person name="Coleman J.J."/>
            <person name="Daboussi M.-J."/>
            <person name="Di Pietro A."/>
            <person name="Dufresne M."/>
            <person name="Freitag M."/>
            <person name="Grabherr M."/>
            <person name="Henrissat B."/>
            <person name="Houterman P.M."/>
            <person name="Kang S."/>
            <person name="Shim W.-B."/>
            <person name="Woloshuk C."/>
            <person name="Xie X."/>
            <person name="Xu J.-R."/>
            <person name="Antoniw J."/>
            <person name="Baker S.E."/>
            <person name="Bluhm B.H."/>
            <person name="Breakspear A."/>
            <person name="Brown D.W."/>
            <person name="Butchko R.A.E."/>
            <person name="Chapman S."/>
            <person name="Coulson R."/>
            <person name="Coutinho P.M."/>
            <person name="Danchin E.G.J."/>
            <person name="Diener A."/>
            <person name="Gale L.R."/>
            <person name="Gardiner D.M."/>
            <person name="Goff S."/>
            <person name="Hammond-Kosack K.E."/>
            <person name="Hilburn K."/>
            <person name="Hua-Van A."/>
            <person name="Jonkers W."/>
            <person name="Kazan K."/>
            <person name="Kodira C.D."/>
            <person name="Koehrsen M."/>
            <person name="Kumar L."/>
            <person name="Lee Y.-H."/>
            <person name="Li L."/>
            <person name="Manners J.M."/>
            <person name="Miranda-Saavedra D."/>
            <person name="Mukherjee M."/>
            <person name="Park G."/>
            <person name="Park J."/>
            <person name="Park S.-Y."/>
            <person name="Proctor R.H."/>
            <person name="Regev A."/>
            <person name="Ruiz-Roldan M.C."/>
            <person name="Sain D."/>
            <person name="Sakthikumar S."/>
            <person name="Sykes S."/>
            <person name="Schwartz D.C."/>
            <person name="Turgeon B.G."/>
            <person name="Wapinski I."/>
            <person name="Yoder O."/>
            <person name="Young S."/>
            <person name="Zeng Q."/>
            <person name="Zhou S."/>
            <person name="Galagan J."/>
            <person name="Cuomo C.A."/>
            <person name="Kistler H.C."/>
            <person name="Rep M."/>
        </authorList>
    </citation>
    <scope>NUCLEOTIDE SEQUENCE [LARGE SCALE GENOMIC DNA]</scope>
    <source>
        <strain>M3125 / FGSC 7600</strain>
    </source>
</reference>
<reference key="4">
    <citation type="journal article" date="2009" name="J. Agric. Food Chem.">
        <title>FvVE1 regulates biosynthesis of the mycotoxins fumonisins and fusarins in Fusarium verticillioides.</title>
        <authorList>
            <person name="Myung K."/>
            <person name="Li S."/>
            <person name="Butchko R.A."/>
            <person name="Busman M."/>
            <person name="Proctor R.H."/>
            <person name="Abbas H.K."/>
            <person name="Calvo A.M."/>
        </authorList>
    </citation>
    <scope>FUNCTION</scope>
    <scope>DISRUPTION PHENOTYPE</scope>
</reference>
<reference key="5">
    <citation type="journal article" date="2014" name="Eukaryot. Cell">
        <title>Coordinated and distinct functions of velvet proteins in Fusarium verticillioides.</title>
        <authorList>
            <person name="Lan N."/>
            <person name="Zhang H."/>
            <person name="Hu C."/>
            <person name="Wang W."/>
            <person name="Calvo A.M."/>
            <person name="Harris S.D."/>
            <person name="Chen S."/>
            <person name="Li S."/>
        </authorList>
    </citation>
    <scope>FUNCTION</scope>
    <scope>DISRUPTION PHENOTYPE</scope>
    <scope>INTERACTION WITH VELB AND VELC</scope>
</reference>
<dbReference type="EMBL" id="DQ274059">
    <property type="protein sequence ID" value="ABC02879.1"/>
    <property type="molecule type" value="Genomic_DNA"/>
</dbReference>
<dbReference type="EMBL" id="CM000578">
    <property type="protein sequence ID" value="EWG50245.1"/>
    <property type="molecule type" value="Genomic_DNA"/>
</dbReference>
<dbReference type="RefSeq" id="XP_018756436.1">
    <property type="nucleotide sequence ID" value="XM_018898529.1"/>
</dbReference>
<dbReference type="SMR" id="W7MRI4"/>
<dbReference type="STRING" id="334819.W7MRI4"/>
<dbReference type="EnsemblFungi" id="FVEG_09521T0">
    <property type="protein sequence ID" value="FVEG_09521T0"/>
    <property type="gene ID" value="FVEG_09521"/>
</dbReference>
<dbReference type="GeneID" id="30067169"/>
<dbReference type="KEGG" id="fvr:FVEG_09521"/>
<dbReference type="VEuPathDB" id="FungiDB:FVEG_09521"/>
<dbReference type="eggNOG" id="ENOG502S0HV">
    <property type="taxonomic scope" value="Eukaryota"/>
</dbReference>
<dbReference type="HOGENOM" id="CLU_022491_2_0_1"/>
<dbReference type="OMA" id="TDITFSY"/>
<dbReference type="OrthoDB" id="121339at110618"/>
<dbReference type="PHI-base" id="PHI:2858"/>
<dbReference type="Proteomes" id="UP000009096">
    <property type="component" value="Chromosome 1"/>
</dbReference>
<dbReference type="GO" id="GO:0005737">
    <property type="term" value="C:cytoplasm"/>
    <property type="evidence" value="ECO:0007669"/>
    <property type="project" value="UniProtKB-SubCell"/>
</dbReference>
<dbReference type="GO" id="GO:0005634">
    <property type="term" value="C:nucleus"/>
    <property type="evidence" value="ECO:0007669"/>
    <property type="project" value="UniProtKB-SubCell"/>
</dbReference>
<dbReference type="GO" id="GO:0030435">
    <property type="term" value="P:sporulation resulting in formation of a cellular spore"/>
    <property type="evidence" value="ECO:0007669"/>
    <property type="project" value="UniProtKB-KW"/>
</dbReference>
<dbReference type="FunFam" id="2.60.40.3960:FF:000001">
    <property type="entry name" value="Sexual development activator VeA"/>
    <property type="match status" value="1"/>
</dbReference>
<dbReference type="Gene3D" id="2.60.40.3960">
    <property type="entry name" value="Velvet domain"/>
    <property type="match status" value="1"/>
</dbReference>
<dbReference type="InterPro" id="IPR021740">
    <property type="entry name" value="Velvet"/>
</dbReference>
<dbReference type="InterPro" id="IPR037525">
    <property type="entry name" value="Velvet_dom"/>
</dbReference>
<dbReference type="InterPro" id="IPR038491">
    <property type="entry name" value="Velvet_dom_sf"/>
</dbReference>
<dbReference type="PANTHER" id="PTHR33572:SF14">
    <property type="entry name" value="DEVELOPMENTAL AND SECONDARY METABOLISM REGULATOR VEA"/>
    <property type="match status" value="1"/>
</dbReference>
<dbReference type="PANTHER" id="PTHR33572">
    <property type="entry name" value="SPORE DEVELOPMENT REGULATOR VOSA"/>
    <property type="match status" value="1"/>
</dbReference>
<dbReference type="Pfam" id="PF11754">
    <property type="entry name" value="Velvet"/>
    <property type="match status" value="2"/>
</dbReference>
<dbReference type="PROSITE" id="PS51821">
    <property type="entry name" value="VELVET"/>
    <property type="match status" value="1"/>
</dbReference>
<keyword id="KW-0963">Cytoplasm</keyword>
<keyword id="KW-0539">Nucleus</keyword>
<keyword id="KW-1185">Reference proteome</keyword>
<keyword id="KW-0749">Sporulation</keyword>
<keyword id="KW-0804">Transcription</keyword>
<keyword id="KW-0805">Transcription regulation</keyword>
<name>VEA_GIBM7</name>
<sequence>MATPSSIPAEPKRDVVNRIHRVTRGNRSLWYQMTVLQQPERARACGSGSKANSDRRPVDPPPVVELRIIEGPSVEEGKDITFDYNANFFLYASLEHARPLARGRVNTPAAGNPPILTGVPASGMAYLDRPTEAGYFIFPDLSVRHEGLYILTFSLFETTKEERDFDLEPADGDLPPGVDYRMEIKTDPFSVYSAKKFPGLMESTQLSKTVADQGCPVRIRRDVRMRKRESKPGAGNSNSGGNGFERREEDFGRRRTITPASEDPHSIRNRSHSNSSEQRTPYTDASRRPSMVDAYPPPPPPPPSYEPAPSASRHLDFGDSSAAQYPTPRQYAHQPGLQITPGPPSASYAPTSQSPYSKTDAPYGYVNRNIPPSCPSPAPSLKHELYDRRQSTSTYVPPSPSVYSTEGHHRRDSRPSYPPTPVAAPRPRPMHSQTSLPALKIDQLVSPVSPLPPIEPQTGPAPELPPINVGGKRKHESVFAQSTRPLHNGQRQVDPHYGRSHRGYSPDHDQGWYSRADGQISSVQFNRYYDE</sequence>
<protein>
    <recommendedName>
        <fullName evidence="10">Developmental and secondary metabolism regulator VE1</fullName>
    </recommendedName>
    <alternativeName>
        <fullName evidence="10">Velvet complex subunit 1</fullName>
    </alternativeName>
</protein>
<gene>
    <name evidence="8" type="primary">VE1</name>
    <name evidence="9" type="synonym">veA</name>
    <name type="ORF">FVEG_09521</name>
</gene>